<evidence type="ECO:0000255" key="1">
    <source>
        <dbReference type="HAMAP-Rule" id="MF_02099"/>
    </source>
</evidence>
<organism>
    <name type="scientific">Proteus vulgaris</name>
    <dbReference type="NCBI Taxonomy" id="585"/>
    <lineage>
        <taxon>Bacteria</taxon>
        <taxon>Pseudomonadati</taxon>
        <taxon>Pseudomonadota</taxon>
        <taxon>Gammaproteobacteria</taxon>
        <taxon>Enterobacterales</taxon>
        <taxon>Morganellaceae</taxon>
        <taxon>Proteus</taxon>
    </lineage>
</organism>
<dbReference type="EMBL" id="X06151">
    <property type="protein sequence ID" value="CAA29510.1"/>
    <property type="molecule type" value="Genomic_DNA"/>
</dbReference>
<dbReference type="PIR" id="S00118">
    <property type="entry name" value="S00118"/>
</dbReference>
<dbReference type="SMR" id="P20926"/>
<dbReference type="STRING" id="585.DR95_2064"/>
<dbReference type="eggNOG" id="COG0375">
    <property type="taxonomic scope" value="Bacteria"/>
</dbReference>
<dbReference type="GO" id="GO:0016151">
    <property type="term" value="F:nickel cation binding"/>
    <property type="evidence" value="ECO:0007669"/>
    <property type="project" value="UniProtKB-UniRule"/>
</dbReference>
<dbReference type="GO" id="GO:0008270">
    <property type="term" value="F:zinc ion binding"/>
    <property type="evidence" value="ECO:0007669"/>
    <property type="project" value="UniProtKB-UniRule"/>
</dbReference>
<dbReference type="GO" id="GO:0051604">
    <property type="term" value="P:protein maturation"/>
    <property type="evidence" value="ECO:0007669"/>
    <property type="project" value="InterPro"/>
</dbReference>
<dbReference type="GO" id="GO:0036211">
    <property type="term" value="P:protein modification process"/>
    <property type="evidence" value="ECO:0007669"/>
    <property type="project" value="UniProtKB-UniRule"/>
</dbReference>
<dbReference type="FunFam" id="3.30.2320.80:FF:000001">
    <property type="entry name" value="Hydrogenase maturation factor HypA"/>
    <property type="match status" value="1"/>
</dbReference>
<dbReference type="Gene3D" id="3.30.2320.80">
    <property type="match status" value="1"/>
</dbReference>
<dbReference type="HAMAP" id="MF_02099">
    <property type="entry name" value="HybF_subfam"/>
    <property type="match status" value="1"/>
</dbReference>
<dbReference type="HAMAP" id="MF_00213">
    <property type="entry name" value="HypA_HybF"/>
    <property type="match status" value="1"/>
</dbReference>
<dbReference type="InterPro" id="IPR039002">
    <property type="entry name" value="HybF"/>
</dbReference>
<dbReference type="InterPro" id="IPR020538">
    <property type="entry name" value="Hydgase_Ni_incorp_HypA/HybF_CS"/>
</dbReference>
<dbReference type="InterPro" id="IPR000688">
    <property type="entry name" value="HypA/HybF"/>
</dbReference>
<dbReference type="NCBIfam" id="TIGR00100">
    <property type="entry name" value="hypA"/>
    <property type="match status" value="1"/>
</dbReference>
<dbReference type="NCBIfam" id="NF002979">
    <property type="entry name" value="PRK03681.1"/>
    <property type="match status" value="1"/>
</dbReference>
<dbReference type="NCBIfam" id="NF009046">
    <property type="entry name" value="PRK12380.1"/>
    <property type="match status" value="1"/>
</dbReference>
<dbReference type="PANTHER" id="PTHR34535">
    <property type="entry name" value="HYDROGENASE MATURATION FACTOR HYPA"/>
    <property type="match status" value="1"/>
</dbReference>
<dbReference type="PANTHER" id="PTHR34535:SF3">
    <property type="entry name" value="HYDROGENASE MATURATION FACTOR HYPA"/>
    <property type="match status" value="1"/>
</dbReference>
<dbReference type="Pfam" id="PF01155">
    <property type="entry name" value="HypA"/>
    <property type="match status" value="1"/>
</dbReference>
<dbReference type="PIRSF" id="PIRSF004761">
    <property type="entry name" value="Hydrgn_mat_HypA"/>
    <property type="match status" value="1"/>
</dbReference>
<dbReference type="PROSITE" id="PS01249">
    <property type="entry name" value="HYPA"/>
    <property type="match status" value="1"/>
</dbReference>
<comment type="function">
    <text evidence="1">Involved in the maturation of [NiFe] hydrogenases. Required for nickel insertion into the metal center of the hydrogenase.</text>
</comment>
<comment type="similarity">
    <text evidence="1">Belongs to the HypA/HybF family. HybF subfamily.</text>
</comment>
<proteinExistence type="inferred from homology"/>
<reference key="1">
    <citation type="journal article" date="1987" name="Eur. J. Biochem.">
        <title>Nucleotide sequence and comparative analysis of the frd operon encoding the fumarate reductase of Proteus vulgaris. Extensive sequence divergence of the membrane anchors and absence of an frd-linked ampC cephalosporinase gene.</title>
        <authorList>
            <person name="Cole S.T."/>
        </authorList>
    </citation>
    <scope>NUCLEOTIDE SEQUENCE [GENOMIC DNA]</scope>
</reference>
<gene>
    <name evidence="1" type="primary">hybF</name>
</gene>
<feature type="chain" id="PRO_0000129068" description="Hydrogenase maturation factor HybF">
    <location>
        <begin position="1"/>
        <end position="113"/>
    </location>
</feature>
<feature type="binding site" evidence="1">
    <location>
        <position position="2"/>
    </location>
    <ligand>
        <name>Ni(2+)</name>
        <dbReference type="ChEBI" id="CHEBI:49786"/>
    </ligand>
</feature>
<feature type="binding site" evidence="1">
    <location>
        <position position="3"/>
    </location>
    <ligand>
        <name>Ni(2+)</name>
        <dbReference type="ChEBI" id="CHEBI:49786"/>
    </ligand>
</feature>
<feature type="binding site" evidence="1">
    <location>
        <position position="73"/>
    </location>
    <ligand>
        <name>Zn(2+)</name>
        <dbReference type="ChEBI" id="CHEBI:29105"/>
    </ligand>
</feature>
<feature type="binding site" evidence="1">
    <location>
        <position position="76"/>
    </location>
    <ligand>
        <name>Zn(2+)</name>
        <dbReference type="ChEBI" id="CHEBI:29105"/>
    </ligand>
</feature>
<feature type="binding site" evidence="1">
    <location>
        <position position="89"/>
    </location>
    <ligand>
        <name>Zn(2+)</name>
        <dbReference type="ChEBI" id="CHEBI:29105"/>
    </ligand>
</feature>
<feature type="binding site" evidence="1">
    <location>
        <position position="92"/>
    </location>
    <ligand>
        <name>Zn(2+)</name>
        <dbReference type="ChEBI" id="CHEBI:29105"/>
    </ligand>
</feature>
<accession>P20926</accession>
<name>HYBF_PROVU</name>
<sequence>MHEITLCQSAFEIIDSQAKLNNAQKVKSVWMEISALSCVEVSALEFCFDIVCRDTIAQGCQLHIEVIPAKAWCWDCHQVVTVSTFNAGCPACGSQNLRVENDDAMRIKQIEIE</sequence>
<keyword id="KW-0479">Metal-binding</keyword>
<keyword id="KW-0533">Nickel</keyword>
<keyword id="KW-0862">Zinc</keyword>
<protein>
    <recommendedName>
        <fullName evidence="1">Hydrogenase maturation factor HybF</fullName>
    </recommendedName>
</protein>